<evidence type="ECO:0000255" key="1">
    <source>
        <dbReference type="HAMAP-Rule" id="MF_03185"/>
    </source>
</evidence>
<evidence type="ECO:0000269" key="2">
    <source>
    </source>
</evidence>
<evidence type="ECO:0000269" key="3">
    <source>
    </source>
</evidence>
<evidence type="ECO:0000269" key="4">
    <source>
    </source>
</evidence>
<evidence type="ECO:0000269" key="5">
    <source>
    </source>
</evidence>
<evidence type="ECO:0000305" key="6"/>
<sequence>MSLSALHKYRLQYKPVLPKHIADIDNITIEEGAKTQSAVNQKELSELFKHTYGLPICNIVAGKNADIHRVIRCGFILSGGPAAGGHNVVAGLFDGLMKGNKENKLYGFRCGAGGILSNDYIEITAELVDKHRNTGGFDLVGSGRTKIETEEQFATAFKHITALKLNAMVVVGGDDSNTNAALLAEYFAAHGSDCVFVGVPKTIDGDLKNQYIETSFGFDTACKTYSELIGNIQRDAISSRKYWHFIKVMGRSASHIALEAALETQPTYCIISEEVEDKKMTVSQIASEIADIVIERHKKGLNFGVVLIPEGLVEFIPEVKALIKELNNLLAHKKEEYSKITEFSAQKAFVCENISESCAATFKNLPDNIAKQLLLDRDPHGNVNVSAIETESFVSGIVKAEIVKRGIKVPFTPVHHFFGYEGRCAFPSNFDSTYCYALGYTAFILLALKKTGQICCISGLQKPAEEWICGGVPLTIMMNMEQRNGEMKPVIKKALVEIEGKPFKFYQSKRAQWASAEDFVFPGAIQYFGPSEVCDQPTKTLLLEQN</sequence>
<organism>
    <name type="scientific">Entamoeba histolytica (strain ATCC 30459 / HM-1:IMSS / ABRM)</name>
    <dbReference type="NCBI Taxonomy" id="294381"/>
    <lineage>
        <taxon>Eukaryota</taxon>
        <taxon>Amoebozoa</taxon>
        <taxon>Evosea</taxon>
        <taxon>Archamoebae</taxon>
        <taxon>Mastigamoebida</taxon>
        <taxon>Entamoebidae</taxon>
        <taxon>Entamoeba</taxon>
    </lineage>
</organism>
<feature type="chain" id="PRO_0000429719" description="Pyrophosphate--fructose 6-phosphate 1-phosphotransferase">
    <location>
        <begin position="1"/>
        <end position="546"/>
    </location>
</feature>
<feature type="active site" description="Proton acceptor" evidence="1">
    <location>
        <position position="204"/>
    </location>
</feature>
<feature type="binding site" evidence="1">
    <location>
        <position position="80"/>
    </location>
    <ligand>
        <name>diphosphate</name>
        <dbReference type="ChEBI" id="CHEBI:33019"/>
    </ligand>
</feature>
<feature type="binding site" evidence="1">
    <location>
        <position position="174"/>
    </location>
    <ligand>
        <name>Mg(2+)</name>
        <dbReference type="ChEBI" id="CHEBI:18420"/>
        <note>catalytic</note>
    </ligand>
</feature>
<feature type="binding site" description="in other chain" evidence="1">
    <location>
        <begin position="202"/>
        <end position="204"/>
    </location>
    <ligand>
        <name>substrate</name>
        <note>ligand shared between dimeric partners</note>
    </ligand>
</feature>
<feature type="binding site" evidence="1">
    <location>
        <begin position="241"/>
        <end position="242"/>
    </location>
    <ligand>
        <name>substrate</name>
        <note>ligand shared between dimeric partners</note>
    </ligand>
</feature>
<feature type="binding site" description="in other chain" evidence="1">
    <location>
        <begin position="249"/>
        <end position="251"/>
    </location>
    <ligand>
        <name>substrate</name>
        <note>ligand shared between dimeric partners</note>
    </ligand>
</feature>
<feature type="binding site" description="in other chain" evidence="1">
    <location>
        <position position="310"/>
    </location>
    <ligand>
        <name>substrate</name>
        <note>ligand shared between dimeric partners</note>
    </ligand>
</feature>
<feature type="binding site" description="in other chain" evidence="1">
    <location>
        <begin position="420"/>
        <end position="423"/>
    </location>
    <ligand>
        <name>substrate</name>
        <note>ligand shared between dimeric partners</note>
    </ligand>
</feature>
<feature type="site" description="Important for catalytic activity and substrate specificity; stabilizes the transition state when the phosphoryl donor is PPi; prevents ATP from binding by mimicking the alpha-phosphate group of ATP" evidence="1">
    <location>
        <position position="175"/>
    </location>
</feature>
<feature type="site" description="Important for catalytic activity; stabilizes the transition state when the phosphoryl donor is PPi" evidence="1">
    <location>
        <position position="201"/>
    </location>
</feature>
<feature type="sequence conflict" description="In Ref. 1; AAC04465." evidence="6" ref="1">
    <original>K</original>
    <variation>I</variation>
    <location>
        <position position="320"/>
    </location>
</feature>
<feature type="sequence conflict" description="In Ref. 1; AAC04465." evidence="6" ref="1">
    <original>A</original>
    <variation>R</variation>
    <location>
        <position position="370"/>
    </location>
</feature>
<name>PFP_ENTH1</name>
<reference key="1">
    <citation type="journal article" date="1998" name="Biochem. J.">
        <title>Cloning and expression of the gene for the active PPi-dependent phosphofructokinase of entamoeba histolytica.</title>
        <authorList>
            <person name="Deng Z."/>
            <person name="Huang M."/>
            <person name="Singh K."/>
            <person name="Albach R.A."/>
            <person name="Latshaw S.P."/>
            <person name="Chang K.P."/>
            <person name="Kemp R.G."/>
        </authorList>
    </citation>
    <scope>NUCLEOTIDE SEQUENCE [MRNA]</scope>
    <scope>PROTEIN SEQUENCE OF 9-14; 20-33; 105-109; 133-144; 227-231; 372-383; 408-415 AND 494-546</scope>
    <scope>FUNCTION</scope>
    <scope>CATALYTIC ACTIVITY</scope>
    <scope>SUBUNIT</scope>
    <scope>BIOPHYSICOCHEMICAL PROPERTIES</scope>
    <source>
        <strain>ATCC 30459 / HM-1:IMSS / ABRM</strain>
    </source>
</reference>
<reference key="2">
    <citation type="journal article" date="2005" name="Nature">
        <title>The genome of the protist parasite Entamoeba histolytica.</title>
        <authorList>
            <person name="Loftus B.J."/>
            <person name="Anderson I."/>
            <person name="Davies R."/>
            <person name="Alsmark U.C."/>
            <person name="Samuelson J."/>
            <person name="Amedeo P."/>
            <person name="Roncaglia P."/>
            <person name="Berriman M."/>
            <person name="Hirt R.P."/>
            <person name="Mann B.J."/>
            <person name="Nozaki T."/>
            <person name="Suh B."/>
            <person name="Pop M."/>
            <person name="Duchene M."/>
            <person name="Ackers J."/>
            <person name="Tannich E."/>
            <person name="Leippe M."/>
            <person name="Hofer M."/>
            <person name="Bruchhaus I."/>
            <person name="Willhoeft U."/>
            <person name="Bhattacharya A."/>
            <person name="Chillingworth T."/>
            <person name="Churcher C.M."/>
            <person name="Hance Z."/>
            <person name="Harris B."/>
            <person name="Harris D."/>
            <person name="Jagels K."/>
            <person name="Moule S."/>
            <person name="Mungall K.L."/>
            <person name="Ormond D."/>
            <person name="Squares R."/>
            <person name="Whitehead S."/>
            <person name="Quail M.A."/>
            <person name="Rabbinowitsch E."/>
            <person name="Norbertczak H."/>
            <person name="Price C."/>
            <person name="Wang Z."/>
            <person name="Guillen N."/>
            <person name="Gilchrist C."/>
            <person name="Stroup S.E."/>
            <person name="Bhattacharya S."/>
            <person name="Lohia A."/>
            <person name="Foster P.G."/>
            <person name="Sicheritz-Ponten T."/>
            <person name="Weber C."/>
            <person name="Singh U."/>
            <person name="Mukherjee C."/>
            <person name="El-Sayed N.M.A."/>
            <person name="Petri W.A."/>
            <person name="Clark C.G."/>
            <person name="Embley T.M."/>
            <person name="Barrell B.G."/>
            <person name="Fraser C.M."/>
            <person name="Hall N."/>
        </authorList>
    </citation>
    <scope>NUCLEOTIDE SEQUENCE [LARGE SCALE GENOMIC DNA]</scope>
    <source>
        <strain>ATCC 30459 / HM-1:IMSS / ABRM</strain>
    </source>
</reference>
<reference key="3">
    <citation type="journal article" date="2010" name="PLoS Negl. Trop. Dis.">
        <title>New assembly, reannotation and analysis of the Entamoeba histolytica genome reveal new genomic features and protein content information.</title>
        <authorList>
            <person name="Lorenzi H.A."/>
            <person name="Puiu D."/>
            <person name="Miller J.R."/>
            <person name="Brinkac L.M."/>
            <person name="Amedeo P."/>
            <person name="Hall N."/>
            <person name="Caler E.V."/>
        </authorList>
    </citation>
    <scope>GENOME REANNOTATION</scope>
    <source>
        <strain>ATCC 30459 / HM-1:IMSS / ABRM</strain>
    </source>
</reference>
<reference key="4">
    <citation type="journal article" date="1974" name="J. Biol. Chem.">
        <title>Pyrophosphate:D-fructose 6-phosphate 1-phosphotransferase. A new enzyme with the glycolytic function of 6-phosphofructokinase.</title>
        <authorList>
            <person name="Reeves R.E."/>
            <person name="South D.J."/>
            <person name="Blytt H.J."/>
            <person name="Warren L.G."/>
        </authorList>
    </citation>
    <scope>FUNCTION</scope>
    <scope>CATALYTIC ACTIVITY</scope>
    <scope>BIOPHYSICOCHEMICAL PROPERTIES</scope>
    <scope>COFACTOR</scope>
    <source>
        <strain>H200</strain>
    </source>
</reference>
<reference key="5">
    <citation type="journal article" date="1976" name="J. Biol. Chem.">
        <title>6-phosphofructokinase (pyrophosphate). Properties of the enzyme from Entamoeba histolytica and its reaction mechanism.</title>
        <authorList>
            <person name="Reeves R.E."/>
            <person name="Serrano R."/>
            <person name="South D.J."/>
        </authorList>
    </citation>
    <scope>FUNCTION</scope>
    <scope>CATALYTIC ACTIVITY</scope>
    <scope>BIOPHYSICOCHEMICAL PROPERTIES</scope>
    <scope>COFACTOR</scope>
    <scope>ACTIVITY REGULATION</scope>
    <source>
        <strain>DKB</strain>
    </source>
</reference>
<reference key="6">
    <citation type="journal article" date="2001" name="J. Biol. Chem.">
        <title>The two phosphofructokinase gene products of Entamoeba histolytica.</title>
        <authorList>
            <person name="Chi A.S."/>
            <person name="Deng Z."/>
            <person name="Albach R.A."/>
            <person name="Kemp R.G."/>
        </authorList>
    </citation>
    <scope>FUNCTION</scope>
</reference>
<proteinExistence type="evidence at protein level"/>
<dbReference type="EC" id="2.7.1.90" evidence="1"/>
<dbReference type="EMBL" id="AF013986">
    <property type="protein sequence ID" value="AAC04465.1"/>
    <property type="molecule type" value="mRNA"/>
</dbReference>
<dbReference type="EMBL" id="DS571186">
    <property type="protein sequence ID" value="EAL47787.1"/>
    <property type="molecule type" value="Genomic_DNA"/>
</dbReference>
<dbReference type="RefSeq" id="XP_653173.1">
    <property type="nucleotide sequence ID" value="XM_648081.2"/>
</dbReference>
<dbReference type="SMR" id="C4LZC2"/>
<dbReference type="STRING" id="5759.C4LZC2"/>
<dbReference type="EnsemblProtists" id="rna_EHI_000730-1">
    <property type="protein sequence ID" value="rna_EHI_000730-1"/>
    <property type="gene ID" value="EHI_000730"/>
</dbReference>
<dbReference type="GeneID" id="3407484"/>
<dbReference type="KEGG" id="ehi:EHI_000730"/>
<dbReference type="VEuPathDB" id="AmoebaDB:EHI5A_039260"/>
<dbReference type="VEuPathDB" id="AmoebaDB:EHI7A_053070"/>
<dbReference type="VEuPathDB" id="AmoebaDB:EHI8A_017480"/>
<dbReference type="VEuPathDB" id="AmoebaDB:EHI_000730"/>
<dbReference type="VEuPathDB" id="AmoebaDB:KM1_048590"/>
<dbReference type="eggNOG" id="KOG2440">
    <property type="taxonomic scope" value="Eukaryota"/>
</dbReference>
<dbReference type="HOGENOM" id="CLU_022288_0_1_1"/>
<dbReference type="InParanoid" id="C4LZC2"/>
<dbReference type="OMA" id="SAKKYWH"/>
<dbReference type="OrthoDB" id="537915at2759"/>
<dbReference type="SABIO-RK" id="C4LZC2"/>
<dbReference type="UniPathway" id="UPA00109">
    <property type="reaction ID" value="UER00182"/>
</dbReference>
<dbReference type="Proteomes" id="UP000001926">
    <property type="component" value="Partially assembled WGS sequence"/>
</dbReference>
<dbReference type="GO" id="GO:0005737">
    <property type="term" value="C:cytoplasm"/>
    <property type="evidence" value="ECO:0007669"/>
    <property type="project" value="UniProtKB-SubCell"/>
</dbReference>
<dbReference type="GO" id="GO:0003872">
    <property type="term" value="F:6-phosphofructokinase activity"/>
    <property type="evidence" value="ECO:0007669"/>
    <property type="project" value="UniProtKB-UniRule"/>
</dbReference>
<dbReference type="GO" id="GO:0005524">
    <property type="term" value="F:ATP binding"/>
    <property type="evidence" value="ECO:0007669"/>
    <property type="project" value="InterPro"/>
</dbReference>
<dbReference type="GO" id="GO:0047334">
    <property type="term" value="F:diphosphate-fructose-6-phosphate 1-phosphotransferase activity"/>
    <property type="evidence" value="ECO:0007669"/>
    <property type="project" value="UniProtKB-EC"/>
</dbReference>
<dbReference type="GO" id="GO:0046872">
    <property type="term" value="F:metal ion binding"/>
    <property type="evidence" value="ECO:0007669"/>
    <property type="project" value="UniProtKB-KW"/>
</dbReference>
<dbReference type="GO" id="GO:0008443">
    <property type="term" value="F:phosphofructokinase activity"/>
    <property type="evidence" value="ECO:0000318"/>
    <property type="project" value="GO_Central"/>
</dbReference>
<dbReference type="GO" id="GO:0006002">
    <property type="term" value="P:fructose 6-phosphate metabolic process"/>
    <property type="evidence" value="ECO:0007669"/>
    <property type="project" value="InterPro"/>
</dbReference>
<dbReference type="GO" id="GO:0009749">
    <property type="term" value="P:response to glucose"/>
    <property type="evidence" value="ECO:0000318"/>
    <property type="project" value="GO_Central"/>
</dbReference>
<dbReference type="Gene3D" id="3.40.50.450">
    <property type="match status" value="1"/>
</dbReference>
<dbReference type="Gene3D" id="3.40.50.460">
    <property type="entry name" value="Phosphofructokinase domain"/>
    <property type="match status" value="1"/>
</dbReference>
<dbReference type="Gene3D" id="1.10.10.480">
    <property type="entry name" value="Phosphofructokinase, domain 3"/>
    <property type="match status" value="1"/>
</dbReference>
<dbReference type="HAMAP" id="MF_01980">
    <property type="entry name" value="Phosphofructokinase_II_Long"/>
    <property type="match status" value="1"/>
</dbReference>
<dbReference type="InterPro" id="IPR022953">
    <property type="entry name" value="ATP_PFK"/>
</dbReference>
<dbReference type="InterPro" id="IPR011183">
    <property type="entry name" value="PfpB_PPi_PFK"/>
</dbReference>
<dbReference type="InterPro" id="IPR000023">
    <property type="entry name" value="Phosphofructokinase_dom"/>
</dbReference>
<dbReference type="InterPro" id="IPR035966">
    <property type="entry name" value="PKF_sf"/>
</dbReference>
<dbReference type="NCBIfam" id="TIGR02477">
    <property type="entry name" value="PFKA_PPi"/>
    <property type="match status" value="1"/>
</dbReference>
<dbReference type="NCBIfam" id="NF005482">
    <property type="entry name" value="PRK07085.1"/>
    <property type="match status" value="1"/>
</dbReference>
<dbReference type="PANTHER" id="PTHR43650">
    <property type="entry name" value="PYROPHOSPHATE--FRUCTOSE 6-PHOSPHATE 1-PHOSPHOTRANSFERASE"/>
    <property type="match status" value="1"/>
</dbReference>
<dbReference type="PANTHER" id="PTHR43650:SF1">
    <property type="entry name" value="PYROPHOSPHATE--FRUCTOSE 6-PHOSPHATE 1-PHOSPHOTRANSFERASE SUBUNIT BETA 2"/>
    <property type="match status" value="1"/>
</dbReference>
<dbReference type="Pfam" id="PF00365">
    <property type="entry name" value="PFK"/>
    <property type="match status" value="1"/>
</dbReference>
<dbReference type="PIRSF" id="PIRSF005677">
    <property type="entry name" value="PPi_PFK_PfpB"/>
    <property type="match status" value="1"/>
</dbReference>
<dbReference type="PRINTS" id="PR00476">
    <property type="entry name" value="PHFRCTKINASE"/>
</dbReference>
<dbReference type="SUPFAM" id="SSF53784">
    <property type="entry name" value="Phosphofructokinase"/>
    <property type="match status" value="1"/>
</dbReference>
<accession>C4LZC2</accession>
<accession>O15705</accession>
<gene>
    <name type="ORF">EHI_000730</name>
</gene>
<keyword id="KW-0963">Cytoplasm</keyword>
<keyword id="KW-0903">Direct protein sequencing</keyword>
<keyword id="KW-0324">Glycolysis</keyword>
<keyword id="KW-0418">Kinase</keyword>
<keyword id="KW-0460">Magnesium</keyword>
<keyword id="KW-0479">Metal-binding</keyword>
<keyword id="KW-1185">Reference proteome</keyword>
<keyword id="KW-0808">Transferase</keyword>
<protein>
    <recommendedName>
        <fullName evidence="1">Pyrophosphate--fructose 6-phosphate 1-phosphotransferase</fullName>
        <ecNumber evidence="1">2.7.1.90</ecNumber>
    </recommendedName>
    <alternativeName>
        <fullName evidence="1">6-phosphofructokinase, pyrophosphate dependent</fullName>
    </alternativeName>
    <alternativeName>
        <fullName evidence="1">PPi-dependent phosphofructokinase</fullName>
        <shortName evidence="1">PPi-PFK</shortName>
    </alternativeName>
    <alternativeName>
        <fullName evidence="1">Pyrophosphate-dependent 6-phosphofructose-1-kinase</fullName>
    </alternativeName>
</protein>
<comment type="function">
    <text evidence="1 2 3 4 5">Catalyzes the phosphorylation of D-fructose 6-phosphate, the first committing step of glycolysis. Uses inorganic phosphate (PPi) as phosphoryl donor instead of ATP like common ATP-dependent phosphofructokinases (ATP-PFKs), which renders the reaction reversible, and can thus function both in glycolysis and gluconeogenesis. Consistently, PPi-PFK can replace the enzymes of both the forward (ATP-PFK) and reverse (fructose-bisphosphatase (FBPase)) reactions.</text>
</comment>
<comment type="catalytic activity">
    <reaction evidence="1 3 4 5">
        <text>beta-D-fructose 6-phosphate + diphosphate = beta-D-fructose 1,6-bisphosphate + phosphate + H(+)</text>
        <dbReference type="Rhea" id="RHEA:13613"/>
        <dbReference type="ChEBI" id="CHEBI:15378"/>
        <dbReference type="ChEBI" id="CHEBI:32966"/>
        <dbReference type="ChEBI" id="CHEBI:33019"/>
        <dbReference type="ChEBI" id="CHEBI:43474"/>
        <dbReference type="ChEBI" id="CHEBI:57634"/>
        <dbReference type="EC" id="2.7.1.90"/>
    </reaction>
</comment>
<comment type="cofactor">
    <cofactor evidence="1 3 4">
        <name>Mg(2+)</name>
        <dbReference type="ChEBI" id="CHEBI:18420"/>
    </cofactor>
    <cofactor evidence="1 3 4">
        <name>Mn(2+)</name>
        <dbReference type="ChEBI" id="CHEBI:29035"/>
    </cofactor>
</comment>
<comment type="activity regulation">
    <text evidence="1 3">Non-allosteric. Competitively inhibited by PPi, Pi and fructose 1,6-bisphosphate.</text>
</comment>
<comment type="biophysicochemical properties">
    <kinetics>
        <KM evidence="3 4 5">14 uM for diphosphate</KM>
        <KM evidence="3 4 5">800 uM for phosphate</KM>
        <KM evidence="3 4 5">38 uM for fructose 6-phosphate</KM>
        <KM evidence="3 4 5">18 uM for fructose 1,6-bisphosphate</KM>
    </kinetics>
    <phDependence>
        <text evidence="3 4 5">Optimum pH is 6.4-7.2.</text>
    </phDependence>
</comment>
<comment type="pathway">
    <text evidence="1">Carbohydrate degradation; glycolysis; D-glyceraldehyde 3-phosphate and glycerone phosphate from D-glucose: step 3/4.</text>
</comment>
<comment type="subunit">
    <text evidence="5">Homodimer.</text>
</comment>
<comment type="subcellular location">
    <subcellularLocation>
        <location evidence="1">Cytoplasm</location>
    </subcellularLocation>
</comment>
<comment type="similarity">
    <text evidence="1">Belongs to the phosphofructokinase type A (PFKA) family. PPi-dependent PFK group II subfamily. Clade 'Long' sub-subfamily.</text>
</comment>